<comment type="function">
    <text evidence="1">Catalyzes the transfer of the diacylglyceryl group from phosphatidylglycerol to the sulfhydryl group of the N-terminal cysteine of a prolipoprotein, the first step in the formation of mature lipoproteins.</text>
</comment>
<comment type="catalytic activity">
    <reaction evidence="1">
        <text>L-cysteinyl-[prolipoprotein] + a 1,2-diacyl-sn-glycero-3-phospho-(1'-sn-glycerol) = an S-1,2-diacyl-sn-glyceryl-L-cysteinyl-[prolipoprotein] + sn-glycerol 1-phosphate + H(+)</text>
        <dbReference type="Rhea" id="RHEA:56712"/>
        <dbReference type="Rhea" id="RHEA-COMP:14679"/>
        <dbReference type="Rhea" id="RHEA-COMP:14680"/>
        <dbReference type="ChEBI" id="CHEBI:15378"/>
        <dbReference type="ChEBI" id="CHEBI:29950"/>
        <dbReference type="ChEBI" id="CHEBI:57685"/>
        <dbReference type="ChEBI" id="CHEBI:64716"/>
        <dbReference type="ChEBI" id="CHEBI:140658"/>
        <dbReference type="EC" id="2.5.1.145"/>
    </reaction>
</comment>
<comment type="pathway">
    <text evidence="1">Protein modification; lipoprotein biosynthesis (diacylglyceryl transfer).</text>
</comment>
<comment type="subcellular location">
    <subcellularLocation>
        <location evidence="1">Cell inner membrane</location>
        <topology evidence="1">Multi-pass membrane protein</topology>
    </subcellularLocation>
</comment>
<comment type="similarity">
    <text evidence="1">Belongs to the Lgt family.</text>
</comment>
<keyword id="KW-0997">Cell inner membrane</keyword>
<keyword id="KW-1003">Cell membrane</keyword>
<keyword id="KW-0472">Membrane</keyword>
<keyword id="KW-0808">Transferase</keyword>
<keyword id="KW-0812">Transmembrane</keyword>
<keyword id="KW-1133">Transmembrane helix</keyword>
<accession>A8A3W1</accession>
<protein>
    <recommendedName>
        <fullName evidence="1">Phosphatidylglycerol--prolipoprotein diacylglyceryl transferase</fullName>
        <ecNumber evidence="1">2.5.1.145</ecNumber>
    </recommendedName>
</protein>
<dbReference type="EC" id="2.5.1.145" evidence="1"/>
<dbReference type="EMBL" id="CP000802">
    <property type="protein sequence ID" value="ABV07215.1"/>
    <property type="molecule type" value="Genomic_DNA"/>
</dbReference>
<dbReference type="RefSeq" id="WP_000204658.1">
    <property type="nucleotide sequence ID" value="NC_009800.1"/>
</dbReference>
<dbReference type="SMR" id="A8A3W1"/>
<dbReference type="GeneID" id="93779170"/>
<dbReference type="KEGG" id="ecx:EcHS_A2974"/>
<dbReference type="HOGENOM" id="CLU_013386_1_0_6"/>
<dbReference type="UniPathway" id="UPA00664"/>
<dbReference type="GO" id="GO:0005886">
    <property type="term" value="C:plasma membrane"/>
    <property type="evidence" value="ECO:0007669"/>
    <property type="project" value="UniProtKB-SubCell"/>
</dbReference>
<dbReference type="GO" id="GO:0008961">
    <property type="term" value="F:phosphatidylglycerol-prolipoprotein diacylglyceryl transferase activity"/>
    <property type="evidence" value="ECO:0007669"/>
    <property type="project" value="UniProtKB-UniRule"/>
</dbReference>
<dbReference type="GO" id="GO:0042158">
    <property type="term" value="P:lipoprotein biosynthetic process"/>
    <property type="evidence" value="ECO:0007669"/>
    <property type="project" value="UniProtKB-UniRule"/>
</dbReference>
<dbReference type="HAMAP" id="MF_01147">
    <property type="entry name" value="Lgt"/>
    <property type="match status" value="1"/>
</dbReference>
<dbReference type="InterPro" id="IPR001640">
    <property type="entry name" value="Lgt"/>
</dbReference>
<dbReference type="NCBIfam" id="TIGR00544">
    <property type="entry name" value="lgt"/>
    <property type="match status" value="1"/>
</dbReference>
<dbReference type="PANTHER" id="PTHR30589:SF0">
    <property type="entry name" value="PHOSPHATIDYLGLYCEROL--PROLIPOPROTEIN DIACYLGLYCERYL TRANSFERASE"/>
    <property type="match status" value="1"/>
</dbReference>
<dbReference type="PANTHER" id="PTHR30589">
    <property type="entry name" value="PROLIPOPROTEIN DIACYLGLYCERYL TRANSFERASE"/>
    <property type="match status" value="1"/>
</dbReference>
<dbReference type="Pfam" id="PF01790">
    <property type="entry name" value="LGT"/>
    <property type="match status" value="1"/>
</dbReference>
<dbReference type="PROSITE" id="PS01311">
    <property type="entry name" value="LGT"/>
    <property type="match status" value="1"/>
</dbReference>
<proteinExistence type="inferred from homology"/>
<organism>
    <name type="scientific">Escherichia coli O9:H4 (strain HS)</name>
    <dbReference type="NCBI Taxonomy" id="331112"/>
    <lineage>
        <taxon>Bacteria</taxon>
        <taxon>Pseudomonadati</taxon>
        <taxon>Pseudomonadota</taxon>
        <taxon>Gammaproteobacteria</taxon>
        <taxon>Enterobacterales</taxon>
        <taxon>Enterobacteriaceae</taxon>
        <taxon>Escherichia</taxon>
    </lineage>
</organism>
<feature type="chain" id="PRO_1000065475" description="Phosphatidylglycerol--prolipoprotein diacylglyceryl transferase">
    <location>
        <begin position="1"/>
        <end position="291"/>
    </location>
</feature>
<feature type="transmembrane region" description="Helical" evidence="1">
    <location>
        <begin position="21"/>
        <end position="41"/>
    </location>
</feature>
<feature type="transmembrane region" description="Helical" evidence="1">
    <location>
        <begin position="60"/>
        <end position="80"/>
    </location>
</feature>
<feature type="transmembrane region" description="Helical" evidence="1">
    <location>
        <begin position="96"/>
        <end position="116"/>
    </location>
</feature>
<feature type="transmembrane region" description="Helical" evidence="1">
    <location>
        <begin position="225"/>
        <end position="245"/>
    </location>
</feature>
<feature type="transmembrane region" description="Helical" evidence="1">
    <location>
        <begin position="260"/>
        <end position="280"/>
    </location>
</feature>
<feature type="binding site" evidence="1">
    <location>
        <position position="143"/>
    </location>
    <ligand>
        <name>a 1,2-diacyl-sn-glycero-3-phospho-(1'-sn-glycerol)</name>
        <dbReference type="ChEBI" id="CHEBI:64716"/>
    </ligand>
</feature>
<sequence length="291" mass="33108">MTSSYLHFPEFDPVIFSIGPVALHWYGLMYLVGFIFAMWLATRRANRPGSGWTKNEVENLLYAGFLGVFLGGRIGYVLFYNFPQFMADPLYLFRVWDGGMSFHGGLIGVIVVMIIFARRTKRSFFQVSDFIAPLIPFGLGAGRLGNFINGELWGRVDPNFPFAMLFPGSRTEDILLLQTNPQWQSIFDTYGVLPRHPSQLYELLLEGVVLFIILNLYIRKPRPMGAVSGLFLIGYGAFRIIVEFFRQPDAQFTGAWVQYISMGQILSIPMIVAGVIMMVWAYRRSPQQHVS</sequence>
<evidence type="ECO:0000255" key="1">
    <source>
        <dbReference type="HAMAP-Rule" id="MF_01147"/>
    </source>
</evidence>
<gene>
    <name evidence="1" type="primary">lgt</name>
    <name type="ordered locus">EcHS_A2974</name>
</gene>
<name>LGT_ECOHS</name>
<reference key="1">
    <citation type="journal article" date="2008" name="J. Bacteriol.">
        <title>The pangenome structure of Escherichia coli: comparative genomic analysis of E. coli commensal and pathogenic isolates.</title>
        <authorList>
            <person name="Rasko D.A."/>
            <person name="Rosovitz M.J."/>
            <person name="Myers G.S.A."/>
            <person name="Mongodin E.F."/>
            <person name="Fricke W.F."/>
            <person name="Gajer P."/>
            <person name="Crabtree J."/>
            <person name="Sebaihia M."/>
            <person name="Thomson N.R."/>
            <person name="Chaudhuri R."/>
            <person name="Henderson I.R."/>
            <person name="Sperandio V."/>
            <person name="Ravel J."/>
        </authorList>
    </citation>
    <scope>NUCLEOTIDE SEQUENCE [LARGE SCALE GENOMIC DNA]</scope>
    <source>
        <strain>HS</strain>
    </source>
</reference>